<evidence type="ECO:0000255" key="1">
    <source>
        <dbReference type="HAMAP-Rule" id="MF_01310"/>
    </source>
</evidence>
<evidence type="ECO:0000305" key="2"/>
<name>RS11_SERP5</name>
<protein>
    <recommendedName>
        <fullName evidence="1">Small ribosomal subunit protein uS11</fullName>
    </recommendedName>
    <alternativeName>
        <fullName evidence="2">30S ribosomal protein S11</fullName>
    </alternativeName>
</protein>
<sequence length="129" mass="13847">MAKAPVRTRKRVRKQVSDGVAHVHASFNNTIVTITDRQGNALGWATAGGSGFRGSRKSTPFAAQVAAERCADAVKEYGIKNLEVMVKGPGPGRESTIRALNAAGFRITNITDVTPIPHNGCRPPKKRRV</sequence>
<accession>A8GKH5</accession>
<dbReference type="EMBL" id="CP000826">
    <property type="protein sequence ID" value="ABV43615.1"/>
    <property type="molecule type" value="Genomic_DNA"/>
</dbReference>
<dbReference type="SMR" id="A8GKH5"/>
<dbReference type="STRING" id="399741.Spro_4521"/>
<dbReference type="KEGG" id="spe:Spro_4521"/>
<dbReference type="eggNOG" id="COG0100">
    <property type="taxonomic scope" value="Bacteria"/>
</dbReference>
<dbReference type="HOGENOM" id="CLU_072439_5_0_6"/>
<dbReference type="OrthoDB" id="9806415at2"/>
<dbReference type="GO" id="GO:1990904">
    <property type="term" value="C:ribonucleoprotein complex"/>
    <property type="evidence" value="ECO:0007669"/>
    <property type="project" value="UniProtKB-KW"/>
</dbReference>
<dbReference type="GO" id="GO:0005840">
    <property type="term" value="C:ribosome"/>
    <property type="evidence" value="ECO:0007669"/>
    <property type="project" value="UniProtKB-KW"/>
</dbReference>
<dbReference type="GO" id="GO:0019843">
    <property type="term" value="F:rRNA binding"/>
    <property type="evidence" value="ECO:0007669"/>
    <property type="project" value="UniProtKB-UniRule"/>
</dbReference>
<dbReference type="GO" id="GO:0003735">
    <property type="term" value="F:structural constituent of ribosome"/>
    <property type="evidence" value="ECO:0007669"/>
    <property type="project" value="InterPro"/>
</dbReference>
<dbReference type="GO" id="GO:0006412">
    <property type="term" value="P:translation"/>
    <property type="evidence" value="ECO:0007669"/>
    <property type="project" value="UniProtKB-UniRule"/>
</dbReference>
<dbReference type="FunFam" id="3.30.420.80:FF:000001">
    <property type="entry name" value="30S ribosomal protein S11"/>
    <property type="match status" value="1"/>
</dbReference>
<dbReference type="Gene3D" id="3.30.420.80">
    <property type="entry name" value="Ribosomal protein S11"/>
    <property type="match status" value="1"/>
</dbReference>
<dbReference type="HAMAP" id="MF_01310">
    <property type="entry name" value="Ribosomal_uS11"/>
    <property type="match status" value="1"/>
</dbReference>
<dbReference type="InterPro" id="IPR001971">
    <property type="entry name" value="Ribosomal_uS11"/>
</dbReference>
<dbReference type="InterPro" id="IPR019981">
    <property type="entry name" value="Ribosomal_uS11_bac-type"/>
</dbReference>
<dbReference type="InterPro" id="IPR018102">
    <property type="entry name" value="Ribosomal_uS11_CS"/>
</dbReference>
<dbReference type="InterPro" id="IPR036967">
    <property type="entry name" value="Ribosomal_uS11_sf"/>
</dbReference>
<dbReference type="NCBIfam" id="NF003698">
    <property type="entry name" value="PRK05309.1"/>
    <property type="match status" value="1"/>
</dbReference>
<dbReference type="NCBIfam" id="TIGR03632">
    <property type="entry name" value="uS11_bact"/>
    <property type="match status" value="1"/>
</dbReference>
<dbReference type="PANTHER" id="PTHR11759">
    <property type="entry name" value="40S RIBOSOMAL PROTEIN S14/30S RIBOSOMAL PROTEIN S11"/>
    <property type="match status" value="1"/>
</dbReference>
<dbReference type="Pfam" id="PF00411">
    <property type="entry name" value="Ribosomal_S11"/>
    <property type="match status" value="1"/>
</dbReference>
<dbReference type="PIRSF" id="PIRSF002131">
    <property type="entry name" value="Ribosomal_S11"/>
    <property type="match status" value="1"/>
</dbReference>
<dbReference type="SUPFAM" id="SSF53137">
    <property type="entry name" value="Translational machinery components"/>
    <property type="match status" value="1"/>
</dbReference>
<dbReference type="PROSITE" id="PS00054">
    <property type="entry name" value="RIBOSOMAL_S11"/>
    <property type="match status" value="1"/>
</dbReference>
<reference key="1">
    <citation type="submission" date="2007-09" db="EMBL/GenBank/DDBJ databases">
        <title>Complete sequence of chromosome of Serratia proteamaculans 568.</title>
        <authorList>
            <consortium name="US DOE Joint Genome Institute"/>
            <person name="Copeland A."/>
            <person name="Lucas S."/>
            <person name="Lapidus A."/>
            <person name="Barry K."/>
            <person name="Glavina del Rio T."/>
            <person name="Dalin E."/>
            <person name="Tice H."/>
            <person name="Pitluck S."/>
            <person name="Chain P."/>
            <person name="Malfatti S."/>
            <person name="Shin M."/>
            <person name="Vergez L."/>
            <person name="Schmutz J."/>
            <person name="Larimer F."/>
            <person name="Land M."/>
            <person name="Hauser L."/>
            <person name="Kyrpides N."/>
            <person name="Kim E."/>
            <person name="Taghavi S."/>
            <person name="Newman L."/>
            <person name="Vangronsveld J."/>
            <person name="van der Lelie D."/>
            <person name="Richardson P."/>
        </authorList>
    </citation>
    <scope>NUCLEOTIDE SEQUENCE [LARGE SCALE GENOMIC DNA]</scope>
    <source>
        <strain>568</strain>
    </source>
</reference>
<comment type="function">
    <text evidence="1">Located on the platform of the 30S subunit, it bridges several disparate RNA helices of the 16S rRNA. Forms part of the Shine-Dalgarno cleft in the 70S ribosome.</text>
</comment>
<comment type="subunit">
    <text evidence="1">Part of the 30S ribosomal subunit. Interacts with proteins S7 and S18. Binds to IF-3.</text>
</comment>
<comment type="similarity">
    <text evidence="1">Belongs to the universal ribosomal protein uS11 family.</text>
</comment>
<feature type="chain" id="PRO_1000067505" description="Small ribosomal subunit protein uS11">
    <location>
        <begin position="1"/>
        <end position="129"/>
    </location>
</feature>
<organism>
    <name type="scientific">Serratia proteamaculans (strain 568)</name>
    <dbReference type="NCBI Taxonomy" id="399741"/>
    <lineage>
        <taxon>Bacteria</taxon>
        <taxon>Pseudomonadati</taxon>
        <taxon>Pseudomonadota</taxon>
        <taxon>Gammaproteobacteria</taxon>
        <taxon>Enterobacterales</taxon>
        <taxon>Yersiniaceae</taxon>
        <taxon>Serratia</taxon>
    </lineage>
</organism>
<keyword id="KW-0687">Ribonucleoprotein</keyword>
<keyword id="KW-0689">Ribosomal protein</keyword>
<keyword id="KW-0694">RNA-binding</keyword>
<keyword id="KW-0699">rRNA-binding</keyword>
<gene>
    <name evidence="1" type="primary">rpsK</name>
    <name type="ordered locus">Spro_4521</name>
</gene>
<proteinExistence type="inferred from homology"/>